<dbReference type="EC" id="6.5.1.1" evidence="1 2"/>
<dbReference type="EMBL" id="AL123456">
    <property type="protein sequence ID" value="CCP45871.1"/>
    <property type="molecule type" value="Genomic_DNA"/>
</dbReference>
<dbReference type="PIR" id="G70649">
    <property type="entry name" value="G70649"/>
</dbReference>
<dbReference type="RefSeq" id="NP_217578.1">
    <property type="nucleotide sequence ID" value="NC_000962.3"/>
</dbReference>
<dbReference type="RefSeq" id="WP_003912069.1">
    <property type="nucleotide sequence ID" value="NZ_NVQJ01000011.1"/>
</dbReference>
<dbReference type="SMR" id="P9WNV5"/>
<dbReference type="FunCoup" id="P9WNV5">
    <property type="interactions" value="226"/>
</dbReference>
<dbReference type="STRING" id="83332.Rv3062"/>
<dbReference type="PaxDb" id="83332-Rv3062"/>
<dbReference type="DNASU" id="887553"/>
<dbReference type="GeneID" id="887553"/>
<dbReference type="KEGG" id="mtu:Rv3062"/>
<dbReference type="KEGG" id="mtv:RVBD_3062"/>
<dbReference type="TubercuList" id="Rv3062"/>
<dbReference type="eggNOG" id="COG1793">
    <property type="taxonomic scope" value="Bacteria"/>
</dbReference>
<dbReference type="InParanoid" id="P9WNV5"/>
<dbReference type="OrthoDB" id="3733803at2"/>
<dbReference type="PhylomeDB" id="P9WNV5"/>
<dbReference type="SABIO-RK" id="P9WNV5"/>
<dbReference type="Proteomes" id="UP000001584">
    <property type="component" value="Chromosome"/>
</dbReference>
<dbReference type="GO" id="GO:0009274">
    <property type="term" value="C:peptidoglycan-based cell wall"/>
    <property type="evidence" value="ECO:0007005"/>
    <property type="project" value="MTBBASE"/>
</dbReference>
<dbReference type="GO" id="GO:0005524">
    <property type="term" value="F:ATP binding"/>
    <property type="evidence" value="ECO:0007669"/>
    <property type="project" value="UniProtKB-UniRule"/>
</dbReference>
<dbReference type="GO" id="GO:0003677">
    <property type="term" value="F:DNA binding"/>
    <property type="evidence" value="ECO:0007669"/>
    <property type="project" value="InterPro"/>
</dbReference>
<dbReference type="GO" id="GO:0003910">
    <property type="term" value="F:DNA ligase (ATP) activity"/>
    <property type="evidence" value="ECO:0000314"/>
    <property type="project" value="MTBBASE"/>
</dbReference>
<dbReference type="GO" id="GO:0000287">
    <property type="term" value="F:magnesium ion binding"/>
    <property type="evidence" value="ECO:0000314"/>
    <property type="project" value="MTBBASE"/>
</dbReference>
<dbReference type="GO" id="GO:0051301">
    <property type="term" value="P:cell division"/>
    <property type="evidence" value="ECO:0007669"/>
    <property type="project" value="UniProtKB-KW"/>
</dbReference>
<dbReference type="GO" id="GO:0071897">
    <property type="term" value="P:DNA biosynthetic process"/>
    <property type="evidence" value="ECO:0007669"/>
    <property type="project" value="InterPro"/>
</dbReference>
<dbReference type="GO" id="GO:0006310">
    <property type="term" value="P:DNA recombination"/>
    <property type="evidence" value="ECO:0007669"/>
    <property type="project" value="UniProtKB-UniRule"/>
</dbReference>
<dbReference type="GO" id="GO:0006281">
    <property type="term" value="P:DNA repair"/>
    <property type="evidence" value="ECO:0007669"/>
    <property type="project" value="UniProtKB-UniRule"/>
</dbReference>
<dbReference type="GO" id="GO:0006260">
    <property type="term" value="P:DNA replication"/>
    <property type="evidence" value="ECO:0007669"/>
    <property type="project" value="UniProtKB-UniRule"/>
</dbReference>
<dbReference type="CDD" id="cd07901">
    <property type="entry name" value="Adenylation_DNA_ligase_Arch_LigB"/>
    <property type="match status" value="1"/>
</dbReference>
<dbReference type="CDD" id="cd07972">
    <property type="entry name" value="OBF_DNA_ligase_Arch_LigB"/>
    <property type="match status" value="1"/>
</dbReference>
<dbReference type="FunFam" id="1.10.3260.10:FF:000009">
    <property type="entry name" value="Probable DNA ligase"/>
    <property type="match status" value="1"/>
</dbReference>
<dbReference type="FunFam" id="2.40.50.140:FF:000163">
    <property type="entry name" value="Probable DNA ligase"/>
    <property type="match status" value="1"/>
</dbReference>
<dbReference type="FunFam" id="3.30.470.30:FF:000012">
    <property type="entry name" value="Probable DNA ligase"/>
    <property type="match status" value="1"/>
</dbReference>
<dbReference type="Gene3D" id="1.10.3260.10">
    <property type="entry name" value="DNA ligase, ATP-dependent, N-terminal domain"/>
    <property type="match status" value="1"/>
</dbReference>
<dbReference type="Gene3D" id="3.30.470.30">
    <property type="entry name" value="DNA ligase/mRNA capping enzyme"/>
    <property type="match status" value="1"/>
</dbReference>
<dbReference type="Gene3D" id="2.40.50.140">
    <property type="entry name" value="Nucleic acid-binding proteins"/>
    <property type="match status" value="1"/>
</dbReference>
<dbReference type="HAMAP" id="MF_00407">
    <property type="entry name" value="DNA_ligase"/>
    <property type="match status" value="1"/>
</dbReference>
<dbReference type="InterPro" id="IPR050191">
    <property type="entry name" value="ATP-dep_DNA_ligase"/>
</dbReference>
<dbReference type="InterPro" id="IPR022865">
    <property type="entry name" value="DNA_ligae_ATP-dep_bac/arc"/>
</dbReference>
<dbReference type="InterPro" id="IPR000977">
    <property type="entry name" value="DNA_ligase_ATP-dep"/>
</dbReference>
<dbReference type="InterPro" id="IPR012309">
    <property type="entry name" value="DNA_ligase_ATP-dep_C"/>
</dbReference>
<dbReference type="InterPro" id="IPR012310">
    <property type="entry name" value="DNA_ligase_ATP-dep_cent"/>
</dbReference>
<dbReference type="InterPro" id="IPR016059">
    <property type="entry name" value="DNA_ligase_ATP-dep_CS"/>
</dbReference>
<dbReference type="InterPro" id="IPR012308">
    <property type="entry name" value="DNA_ligase_ATP-dep_N"/>
</dbReference>
<dbReference type="InterPro" id="IPR036599">
    <property type="entry name" value="DNA_ligase_N_sf"/>
</dbReference>
<dbReference type="InterPro" id="IPR012340">
    <property type="entry name" value="NA-bd_OB-fold"/>
</dbReference>
<dbReference type="NCBIfam" id="TIGR00574">
    <property type="entry name" value="dnl1"/>
    <property type="match status" value="1"/>
</dbReference>
<dbReference type="NCBIfam" id="NF002868">
    <property type="entry name" value="PRK03180.1"/>
    <property type="match status" value="1"/>
</dbReference>
<dbReference type="PANTHER" id="PTHR45674">
    <property type="entry name" value="DNA LIGASE 1/3 FAMILY MEMBER"/>
    <property type="match status" value="1"/>
</dbReference>
<dbReference type="PANTHER" id="PTHR45674:SF13">
    <property type="entry name" value="DNA LIGASE-RELATED"/>
    <property type="match status" value="1"/>
</dbReference>
<dbReference type="Pfam" id="PF04679">
    <property type="entry name" value="DNA_ligase_A_C"/>
    <property type="match status" value="1"/>
</dbReference>
<dbReference type="Pfam" id="PF01068">
    <property type="entry name" value="DNA_ligase_A_M"/>
    <property type="match status" value="1"/>
</dbReference>
<dbReference type="Pfam" id="PF04675">
    <property type="entry name" value="DNA_ligase_A_N"/>
    <property type="match status" value="1"/>
</dbReference>
<dbReference type="SUPFAM" id="SSF117018">
    <property type="entry name" value="ATP-dependent DNA ligase DNA-binding domain"/>
    <property type="match status" value="1"/>
</dbReference>
<dbReference type="SUPFAM" id="SSF56091">
    <property type="entry name" value="DNA ligase/mRNA capping enzyme, catalytic domain"/>
    <property type="match status" value="1"/>
</dbReference>
<dbReference type="SUPFAM" id="SSF50249">
    <property type="entry name" value="Nucleic acid-binding proteins"/>
    <property type="match status" value="1"/>
</dbReference>
<dbReference type="PROSITE" id="PS00697">
    <property type="entry name" value="DNA_LIGASE_A1"/>
    <property type="match status" value="1"/>
</dbReference>
<dbReference type="PROSITE" id="PS50160">
    <property type="entry name" value="DNA_LIGASE_A3"/>
    <property type="match status" value="1"/>
</dbReference>
<name>DNLI_MYCTU</name>
<organism>
    <name type="scientific">Mycobacterium tuberculosis (strain ATCC 25618 / H37Rv)</name>
    <dbReference type="NCBI Taxonomy" id="83332"/>
    <lineage>
        <taxon>Bacteria</taxon>
        <taxon>Bacillati</taxon>
        <taxon>Actinomycetota</taxon>
        <taxon>Actinomycetes</taxon>
        <taxon>Mycobacteriales</taxon>
        <taxon>Mycobacteriaceae</taxon>
        <taxon>Mycobacterium</taxon>
        <taxon>Mycobacterium tuberculosis complex</taxon>
    </lineage>
</organism>
<comment type="function">
    <text evidence="1 2">DNA ligase that seals nicks in double-stranded DNA during DNA replication, DNA recombination and DNA repair.</text>
</comment>
<comment type="catalytic activity">
    <reaction evidence="1 2">
        <text>ATP + (deoxyribonucleotide)n-3'-hydroxyl + 5'-phospho-(deoxyribonucleotide)m = (deoxyribonucleotide)n+m + AMP + diphosphate.</text>
        <dbReference type="EC" id="6.5.1.1"/>
    </reaction>
</comment>
<comment type="cofactor">
    <cofactor evidence="1 2">
        <name>Mg(2+)</name>
        <dbReference type="ChEBI" id="CHEBI:18420"/>
    </cofactor>
</comment>
<comment type="biophysicochemical properties">
    <kinetics>
        <KM evidence="2">0.34 mM for ATP</KM>
    </kinetics>
</comment>
<comment type="subunit">
    <text evidence="2">Monomer.</text>
</comment>
<comment type="disruption phenotype">
    <text evidence="2">Not essential for growth.</text>
</comment>
<comment type="similarity">
    <text evidence="1">Belongs to the ATP-dependent DNA ligase family.</text>
</comment>
<accession>P9WNV5</accession>
<accession>L0TBG5</accession>
<accession>P95096</accession>
<accession>Q7D671</accession>
<keyword id="KW-0067">ATP-binding</keyword>
<keyword id="KW-0131">Cell cycle</keyword>
<keyword id="KW-0132">Cell division</keyword>
<keyword id="KW-0227">DNA damage</keyword>
<keyword id="KW-0233">DNA recombination</keyword>
<keyword id="KW-0234">DNA repair</keyword>
<keyword id="KW-0235">DNA replication</keyword>
<keyword id="KW-0436">Ligase</keyword>
<keyword id="KW-0460">Magnesium</keyword>
<keyword id="KW-0479">Metal-binding</keyword>
<keyword id="KW-0547">Nucleotide-binding</keyword>
<keyword id="KW-1185">Reference proteome</keyword>
<sequence length="507" mass="53737">MLLHDVAITSMDVAATSSRLTKVARIAALLHRAAPDTQLVTIIVSWLSGELPQRHIGVGWAALRSLPPPAPQPALTVTGVDATLSKIGTLPGKGSQAQRAALVAELFSAATEAEQTFLLRLLGGELRQGAKGGIMADAVAQAAGLPAATVQRAAMLGGDLAAAAAAGLSGAALDTFTLRVGRPIGPMLAQTATSVHDALERHGGTTIFEAKLDGARVQIHRANDQVRIYTRSLDDVTARLPEVVEATLALPVRDLVADGEAIALCPDNRPQRFQVTASRFGRSVDVAAARATQPLSVFFFDILHRDGTDLLEAPTTERLAALDALVPARHRVDRLITSDPTDAANFLDATLAAGHEGVMAKAPAARYLAGRRGAGWLKVKPVHTLDLVVLAVEWGSGRRRGKLSNIHLGARDPATGGFVMVGKTFKGMTDAMLDWQTTRFHEIAVGPTDGYVVQLRPEQVVEVALDGVQRSSRYPGGLALRFARVVRYRADKDPAEADTIDAVRALY</sequence>
<evidence type="ECO:0000255" key="1">
    <source>
        <dbReference type="HAMAP-Rule" id="MF_00407"/>
    </source>
</evidence>
<evidence type="ECO:0000269" key="2">
    <source>
    </source>
</evidence>
<gene>
    <name type="primary">ligB</name>
    <name type="ordered locus">Rv3062</name>
</gene>
<feature type="chain" id="PRO_0000365231" description="DNA ligase B">
    <location>
        <begin position="1"/>
        <end position="507"/>
    </location>
</feature>
<feature type="region of interest" description="Not required for adenylyltransferase activity, required for nick joining">
    <location>
        <begin position="1"/>
        <end position="172"/>
    </location>
</feature>
<feature type="active site" description="N6-AMP-lysine intermediate" evidence="1">
    <location>
        <position position="211"/>
    </location>
</feature>
<feature type="binding site" evidence="1">
    <location>
        <position position="209"/>
    </location>
    <ligand>
        <name>ATP</name>
        <dbReference type="ChEBI" id="CHEBI:30616"/>
    </ligand>
</feature>
<feature type="binding site" evidence="1">
    <location>
        <position position="216"/>
    </location>
    <ligand>
        <name>ATP</name>
        <dbReference type="ChEBI" id="CHEBI:30616"/>
    </ligand>
</feature>
<feature type="binding site" evidence="1">
    <location>
        <position position="231"/>
    </location>
    <ligand>
        <name>ATP</name>
        <dbReference type="ChEBI" id="CHEBI:30616"/>
    </ligand>
</feature>
<feature type="binding site" evidence="1">
    <location>
        <position position="260"/>
    </location>
    <ligand>
        <name>ATP</name>
        <dbReference type="ChEBI" id="CHEBI:30616"/>
    </ligand>
</feature>
<feature type="binding site" evidence="1">
    <location>
        <position position="300"/>
    </location>
    <ligand>
        <name>ATP</name>
        <dbReference type="ChEBI" id="CHEBI:30616"/>
    </ligand>
</feature>
<feature type="binding site" evidence="1">
    <location>
        <position position="372"/>
    </location>
    <ligand>
        <name>ATP</name>
        <dbReference type="ChEBI" id="CHEBI:30616"/>
    </ligand>
</feature>
<feature type="binding site" evidence="1">
    <location>
        <position position="378"/>
    </location>
    <ligand>
        <name>ATP</name>
        <dbReference type="ChEBI" id="CHEBI:30616"/>
    </ligand>
</feature>
<protein>
    <recommendedName>
        <fullName>DNA ligase B</fullName>
        <shortName>LigB</shortName>
        <ecNumber evidence="1 2">6.5.1.1</ecNumber>
    </recommendedName>
    <alternativeName>
        <fullName evidence="1">Polydeoxyribonucleotide synthase [ATP]</fullName>
    </alternativeName>
</protein>
<reference key="1">
    <citation type="journal article" date="1998" name="Nature">
        <title>Deciphering the biology of Mycobacterium tuberculosis from the complete genome sequence.</title>
        <authorList>
            <person name="Cole S.T."/>
            <person name="Brosch R."/>
            <person name="Parkhill J."/>
            <person name="Garnier T."/>
            <person name="Churcher C.M."/>
            <person name="Harris D.E."/>
            <person name="Gordon S.V."/>
            <person name="Eiglmeier K."/>
            <person name="Gas S."/>
            <person name="Barry C.E. III"/>
            <person name="Tekaia F."/>
            <person name="Badcock K."/>
            <person name="Basham D."/>
            <person name="Brown D."/>
            <person name="Chillingworth T."/>
            <person name="Connor R."/>
            <person name="Davies R.M."/>
            <person name="Devlin K."/>
            <person name="Feltwell T."/>
            <person name="Gentles S."/>
            <person name="Hamlin N."/>
            <person name="Holroyd S."/>
            <person name="Hornsby T."/>
            <person name="Jagels K."/>
            <person name="Krogh A."/>
            <person name="McLean J."/>
            <person name="Moule S."/>
            <person name="Murphy L.D."/>
            <person name="Oliver S."/>
            <person name="Osborne J."/>
            <person name="Quail M.A."/>
            <person name="Rajandream M.A."/>
            <person name="Rogers J."/>
            <person name="Rutter S."/>
            <person name="Seeger K."/>
            <person name="Skelton S."/>
            <person name="Squares S."/>
            <person name="Squares R."/>
            <person name="Sulston J.E."/>
            <person name="Taylor K."/>
            <person name="Whitehead S."/>
            <person name="Barrell B.G."/>
        </authorList>
    </citation>
    <scope>NUCLEOTIDE SEQUENCE [LARGE SCALE GENOMIC DNA]</scope>
    <source>
        <strain>ATCC 25618 / H37Rv</strain>
    </source>
</reference>
<reference key="2">
    <citation type="journal article" date="2004" name="J. Biol. Chem.">
        <title>Biochemical and genetic analysis of the four DNA ligases of mycobacteria.</title>
        <authorList>
            <person name="Gong C."/>
            <person name="Martins A."/>
            <person name="Bongiorno P."/>
            <person name="Glickman M."/>
            <person name="Shuman S."/>
        </authorList>
    </citation>
    <scope>FUNCTION</scope>
    <scope>COFACTOR</scope>
    <scope>BIOPHYSICOCHEMICAL PROPERTIES</scope>
    <scope>SUBUNIT</scope>
    <scope>DOMAIN</scope>
    <scope>DISRUPTION PHENOTYPE</scope>
    <source>
        <strain>ATCC 25618 / H37Rv</strain>
    </source>
</reference>
<reference key="3">
    <citation type="journal article" date="2011" name="Mol. Cell. Proteomics">
        <title>Proteogenomic analysis of Mycobacterium tuberculosis by high resolution mass spectrometry.</title>
        <authorList>
            <person name="Kelkar D.S."/>
            <person name="Kumar D."/>
            <person name="Kumar P."/>
            <person name="Balakrishnan L."/>
            <person name="Muthusamy B."/>
            <person name="Yadav A.K."/>
            <person name="Shrivastava P."/>
            <person name="Marimuthu A."/>
            <person name="Anand S."/>
            <person name="Sundaram H."/>
            <person name="Kingsbury R."/>
            <person name="Harsha H.C."/>
            <person name="Nair B."/>
            <person name="Prasad T.S."/>
            <person name="Chauhan D.S."/>
            <person name="Katoch K."/>
            <person name="Katoch V.M."/>
            <person name="Kumar P."/>
            <person name="Chaerkady R."/>
            <person name="Ramachandran S."/>
            <person name="Dash D."/>
            <person name="Pandey A."/>
        </authorList>
    </citation>
    <scope>IDENTIFICATION BY MASS SPECTROMETRY [LARGE SCALE ANALYSIS]</scope>
    <source>
        <strain>ATCC 25618 / H37Rv</strain>
    </source>
</reference>
<proteinExistence type="evidence at protein level"/>